<reference key="1">
    <citation type="journal article" date="2000" name="Nature">
        <title>Sequence and analysis of chromosome 5 of the plant Arabidopsis thaliana.</title>
        <authorList>
            <person name="Tabata S."/>
            <person name="Kaneko T."/>
            <person name="Nakamura Y."/>
            <person name="Kotani H."/>
            <person name="Kato T."/>
            <person name="Asamizu E."/>
            <person name="Miyajima N."/>
            <person name="Sasamoto S."/>
            <person name="Kimura T."/>
            <person name="Hosouchi T."/>
            <person name="Kawashima K."/>
            <person name="Kohara M."/>
            <person name="Matsumoto M."/>
            <person name="Matsuno A."/>
            <person name="Muraki A."/>
            <person name="Nakayama S."/>
            <person name="Nakazaki N."/>
            <person name="Naruo K."/>
            <person name="Okumura S."/>
            <person name="Shinpo S."/>
            <person name="Takeuchi C."/>
            <person name="Wada T."/>
            <person name="Watanabe A."/>
            <person name="Yamada M."/>
            <person name="Yasuda M."/>
            <person name="Sato S."/>
            <person name="de la Bastide M."/>
            <person name="Huang E."/>
            <person name="Spiegel L."/>
            <person name="Gnoj L."/>
            <person name="O'Shaughnessy A."/>
            <person name="Preston R."/>
            <person name="Habermann K."/>
            <person name="Murray J."/>
            <person name="Johnson D."/>
            <person name="Rohlfing T."/>
            <person name="Nelson J."/>
            <person name="Stoneking T."/>
            <person name="Pepin K."/>
            <person name="Spieth J."/>
            <person name="Sekhon M."/>
            <person name="Armstrong J."/>
            <person name="Becker M."/>
            <person name="Belter E."/>
            <person name="Cordum H."/>
            <person name="Cordes M."/>
            <person name="Courtney L."/>
            <person name="Courtney W."/>
            <person name="Dante M."/>
            <person name="Du H."/>
            <person name="Edwards J."/>
            <person name="Fryman J."/>
            <person name="Haakensen B."/>
            <person name="Lamar E."/>
            <person name="Latreille P."/>
            <person name="Leonard S."/>
            <person name="Meyer R."/>
            <person name="Mulvaney E."/>
            <person name="Ozersky P."/>
            <person name="Riley A."/>
            <person name="Strowmatt C."/>
            <person name="Wagner-McPherson C."/>
            <person name="Wollam A."/>
            <person name="Yoakum M."/>
            <person name="Bell M."/>
            <person name="Dedhia N."/>
            <person name="Parnell L."/>
            <person name="Shah R."/>
            <person name="Rodriguez M."/>
            <person name="Hoon See L."/>
            <person name="Vil D."/>
            <person name="Baker J."/>
            <person name="Kirchoff K."/>
            <person name="Toth K."/>
            <person name="King L."/>
            <person name="Bahret A."/>
            <person name="Miller B."/>
            <person name="Marra M.A."/>
            <person name="Martienssen R."/>
            <person name="McCombie W.R."/>
            <person name="Wilson R.K."/>
            <person name="Murphy G."/>
            <person name="Bancroft I."/>
            <person name="Volckaert G."/>
            <person name="Wambutt R."/>
            <person name="Duesterhoeft A."/>
            <person name="Stiekema W."/>
            <person name="Pohl T."/>
            <person name="Entian K.-D."/>
            <person name="Terryn N."/>
            <person name="Hartley N."/>
            <person name="Bent E."/>
            <person name="Johnson S."/>
            <person name="Langham S.-A."/>
            <person name="McCullagh B."/>
            <person name="Robben J."/>
            <person name="Grymonprez B."/>
            <person name="Zimmermann W."/>
            <person name="Ramsperger U."/>
            <person name="Wedler H."/>
            <person name="Balke K."/>
            <person name="Wedler E."/>
            <person name="Peters S."/>
            <person name="van Staveren M."/>
            <person name="Dirkse W."/>
            <person name="Mooijman P."/>
            <person name="Klein Lankhorst R."/>
            <person name="Weitzenegger T."/>
            <person name="Bothe G."/>
            <person name="Rose M."/>
            <person name="Hauf J."/>
            <person name="Berneiser S."/>
            <person name="Hempel S."/>
            <person name="Feldpausch M."/>
            <person name="Lamberth S."/>
            <person name="Villarroel R."/>
            <person name="Gielen J."/>
            <person name="Ardiles W."/>
            <person name="Bents O."/>
            <person name="Lemcke K."/>
            <person name="Kolesov G."/>
            <person name="Mayer K.F.X."/>
            <person name="Rudd S."/>
            <person name="Schoof H."/>
            <person name="Schueller C."/>
            <person name="Zaccaria P."/>
            <person name="Mewes H.-W."/>
            <person name="Bevan M."/>
            <person name="Fransz P.F."/>
        </authorList>
    </citation>
    <scope>NUCLEOTIDE SEQUENCE [LARGE SCALE GENOMIC DNA]</scope>
    <source>
        <strain>cv. Columbia</strain>
    </source>
</reference>
<reference key="2">
    <citation type="journal article" date="2017" name="Plant J.">
        <title>Araport11: a complete reannotation of the Arabidopsis thaliana reference genome.</title>
        <authorList>
            <person name="Cheng C.Y."/>
            <person name="Krishnakumar V."/>
            <person name="Chan A.P."/>
            <person name="Thibaud-Nissen F."/>
            <person name="Schobel S."/>
            <person name="Town C.D."/>
        </authorList>
    </citation>
    <scope>GENOME REANNOTATION</scope>
    <source>
        <strain>cv. Columbia</strain>
    </source>
</reference>
<reference key="3">
    <citation type="submission" date="2005-03" db="EMBL/GenBank/DDBJ databases">
        <title>Large-scale analysis of RIKEN Arabidopsis full-length (RAFL) cDNAs.</title>
        <authorList>
            <person name="Totoki Y."/>
            <person name="Seki M."/>
            <person name="Ishida J."/>
            <person name="Nakajima M."/>
            <person name="Enju A."/>
            <person name="Kamiya A."/>
            <person name="Narusaka M."/>
            <person name="Shin-i T."/>
            <person name="Nakagawa M."/>
            <person name="Sakamoto N."/>
            <person name="Oishi K."/>
            <person name="Kohara Y."/>
            <person name="Kobayashi M."/>
            <person name="Toyoda A."/>
            <person name="Sakaki Y."/>
            <person name="Sakurai T."/>
            <person name="Iida K."/>
            <person name="Akiyama K."/>
            <person name="Satou M."/>
            <person name="Toyoda T."/>
            <person name="Konagaya A."/>
            <person name="Carninci P."/>
            <person name="Kawai J."/>
            <person name="Hayashizaki Y."/>
            <person name="Shinozaki K."/>
        </authorList>
    </citation>
    <scope>NUCLEOTIDE SEQUENCE [LARGE SCALE MRNA]</scope>
    <source>
        <strain>cv. Columbia</strain>
    </source>
</reference>
<reference key="4">
    <citation type="journal article" date="2006" name="Genome Biol.">
        <title>Mining the Arabidopsis thaliana genome for highly-divergent seven transmembrane receptors.</title>
        <authorList>
            <person name="Moriyama E.N."/>
            <person name="Strope P.K."/>
            <person name="Opiyo S.O."/>
            <person name="Chen Z."/>
            <person name="Jones A.M."/>
        </authorList>
    </citation>
    <scope>GENE FAMILY</scope>
</reference>
<reference key="5">
    <citation type="journal article" date="2008" name="Genome Biol.">
        <title>Whole proteome identification of plant candidate G-protein coupled receptors in Arabidopsis, rice, and poplar: computational prediction and in-vivo protein coupling.</title>
        <authorList>
            <person name="Gookin T.E."/>
            <person name="Kim J."/>
            <person name="Assmann S.M."/>
        </authorList>
    </citation>
    <scope>FUNCTION</scope>
    <scope>GENE FAMILY</scope>
    <scope>NOMENCLATURE</scope>
</reference>
<reference key="6">
    <citation type="journal article" date="2012" name="Biochem. Biophys. Res. Commun.">
        <title>Two G-protein-coupled-receptor candidates, Cand2 and Cand7, are involved in Arabidopsis root growth mediated by the bacterial quorum-sensing signals N-acyl-homoserine lactones.</title>
        <authorList>
            <person name="Jin G."/>
            <person name="Liu F."/>
            <person name="Ma H."/>
            <person name="Hao S."/>
            <person name="Zhao Q."/>
            <person name="Bian Z."/>
            <person name="Jia Z."/>
            <person name="Song S."/>
        </authorList>
    </citation>
    <scope>FUNCTION</scope>
    <scope>DISRUPTION PHENOTYPE</scope>
    <scope>INDUCTION BY N-ACYL-HOMOSERINE LACTONES</scope>
    <source>
        <strain>cv. Columbia</strain>
    </source>
</reference>
<sequence length="440" mass="50245">MAKMPLSVVVFLLFSAAFLAVSMAEIKSLVISDDARPMILFEKFGFTHTGHVTVSISSVSVVSTSSDPNPEASRLGFFLLSEESLLQVLLEIQQNPRFCVLDSHYVTHLFTFRDLSPPPNSRFNQSYPVTSPNEYSLFFANCVPETKVSMAVRTEMYNKDPNGSKDYLPAGSTQLPTLYSFFFLCYVAFLGFWSYTCWTNKQTVHRIHLLMAGLLLIKSLNLICAAEDKHYVKITGTPHGWDILFYIFQFIRVVLLFTVIILIGTGWSFLKPFLQEKEKNVLIIVIPLQVLANIASIVIGETGPFIKDWVTWNQVFLLVDIICCCAIIFPIVWSIRSLRETSKTDGKAARNLSKLTLFRQFYIVVIGYLYFTRIVVFALKTIAAYKYQWVSFAAEEIVSLVFYVIMFHMFRPEEKNEYFAVDDDEEEAAALALRDEEFEL</sequence>
<accession>F4JY11</accession>
<accession>Q56YB8</accession>
<accession>Q681D1</accession>
<gene>
    <name evidence="5" type="primary">CAND7</name>
    <name evidence="7" type="ordered locus">At5g18520</name>
    <name evidence="8" type="ORF">T28N17.5</name>
</gene>
<comment type="function">
    <text evidence="3 4">Plays a role in plants and microbes interactions (PubMed:22206669). G-protein coupled receptor involved in root growth mediated by the bacterial quorum-sensing signals N-acyl-homoserine lactones (AHLs) (PubMed:18671868, PubMed:22206669).</text>
</comment>
<comment type="subcellular location">
    <subcellularLocation>
        <location evidence="1">Membrane</location>
        <topology evidence="1">Multi-pass membrane protein</topology>
    </subcellularLocation>
</comment>
<comment type="induction">
    <text evidence="4">Induced by the N-acyl-homoserine lactones (AHLs) N-3-oxo-hexanoyl-homoserine lactone (3OC6-HSL) and N-3-oxo-octanoyl-homoserine lactone (3OC8-HSL).</text>
</comment>
<comment type="disruption phenotype">
    <text evidence="4">Abolished Gram-negative bacteria-mediated promotion of root elongation triggered by the N-acyl-homoserine lactones (AHLs) N-3-oxo-hexanoyl-homoserine lactone (3OC6-HSL) and N-3-oxo-octanoyl-homoserine lactone (3OC8-HSL).</text>
</comment>
<comment type="similarity">
    <text evidence="6">Belongs to the LU7TM family.</text>
</comment>
<keyword id="KW-0217">Developmental protein</keyword>
<keyword id="KW-0297">G-protein coupled receptor</keyword>
<keyword id="KW-0325">Glycoprotein</keyword>
<keyword id="KW-0472">Membrane</keyword>
<keyword id="KW-0675">Receptor</keyword>
<keyword id="KW-1185">Reference proteome</keyword>
<keyword id="KW-0732">Signal</keyword>
<keyword id="KW-0807">Transducer</keyword>
<keyword id="KW-0812">Transmembrane</keyword>
<keyword id="KW-1133">Transmembrane helix</keyword>
<evidence type="ECO:0000255" key="1"/>
<evidence type="ECO:0000255" key="2">
    <source>
        <dbReference type="PROSITE-ProRule" id="PRU00498"/>
    </source>
</evidence>
<evidence type="ECO:0000269" key="3">
    <source>
    </source>
</evidence>
<evidence type="ECO:0000269" key="4">
    <source>
    </source>
</evidence>
<evidence type="ECO:0000303" key="5">
    <source>
    </source>
</evidence>
<evidence type="ECO:0000305" key="6"/>
<evidence type="ECO:0000312" key="7">
    <source>
        <dbReference type="Araport" id="AT5G18520"/>
    </source>
</evidence>
<evidence type="ECO:0000312" key="8">
    <source>
        <dbReference type="EMBL" id="AED92574.1"/>
    </source>
</evidence>
<protein>
    <recommendedName>
        <fullName evidence="5">Protein CANDIDATE G-PROTEIN COUPLED RECEPTOR 7</fullName>
        <shortName evidence="5">AtCand7</shortName>
    </recommendedName>
</protein>
<name>CAND7_ARATH</name>
<dbReference type="EMBL" id="AC069328">
    <property type="status" value="NOT_ANNOTATED_CDS"/>
    <property type="molecule type" value="Genomic_DNA"/>
</dbReference>
<dbReference type="EMBL" id="CP002688">
    <property type="protein sequence ID" value="AED92574.1"/>
    <property type="molecule type" value="Genomic_DNA"/>
</dbReference>
<dbReference type="EMBL" id="AK175686">
    <property type="protein sequence ID" value="BAD43449.1"/>
    <property type="molecule type" value="mRNA"/>
</dbReference>
<dbReference type="EMBL" id="AK221405">
    <property type="protein sequence ID" value="BAD94365.1"/>
    <property type="molecule type" value="mRNA"/>
</dbReference>
<dbReference type="RefSeq" id="NP_197353.1">
    <property type="nucleotide sequence ID" value="NM_121857.4"/>
</dbReference>
<dbReference type="FunCoup" id="F4JY11">
    <property type="interactions" value="3720"/>
</dbReference>
<dbReference type="IntAct" id="F4JY11">
    <property type="interactions" value="1"/>
</dbReference>
<dbReference type="STRING" id="3702.F4JY11"/>
<dbReference type="GlyCosmos" id="F4JY11">
    <property type="glycosylation" value="3 sites, No reported glycans"/>
</dbReference>
<dbReference type="GlyGen" id="F4JY11">
    <property type="glycosylation" value="3 sites"/>
</dbReference>
<dbReference type="PaxDb" id="3702-AT5G18520.1"/>
<dbReference type="ProteomicsDB" id="201731"/>
<dbReference type="EnsemblPlants" id="AT5G18520.1">
    <property type="protein sequence ID" value="AT5G18520.1"/>
    <property type="gene ID" value="AT5G18520"/>
</dbReference>
<dbReference type="GeneID" id="831970"/>
<dbReference type="Gramene" id="AT5G18520.1">
    <property type="protein sequence ID" value="AT5G18520.1"/>
    <property type="gene ID" value="AT5G18520"/>
</dbReference>
<dbReference type="KEGG" id="ath:AT5G18520"/>
<dbReference type="Araport" id="AT5G18520"/>
<dbReference type="TAIR" id="AT5G18520">
    <property type="gene designation" value="CAND7"/>
</dbReference>
<dbReference type="eggNOG" id="KOG2569">
    <property type="taxonomic scope" value="Eukaryota"/>
</dbReference>
<dbReference type="HOGENOM" id="CLU_020277_4_0_1"/>
<dbReference type="InParanoid" id="F4JY11"/>
<dbReference type="OMA" id="HYIQRLF"/>
<dbReference type="OrthoDB" id="29657at2759"/>
<dbReference type="PRO" id="PR:F4JY11"/>
<dbReference type="Proteomes" id="UP000006548">
    <property type="component" value="Chromosome 5"/>
</dbReference>
<dbReference type="ExpressionAtlas" id="F4JY11">
    <property type="expression patterns" value="baseline and differential"/>
</dbReference>
<dbReference type="GO" id="GO:0016020">
    <property type="term" value="C:membrane"/>
    <property type="evidence" value="ECO:0007669"/>
    <property type="project" value="UniProtKB-SubCell"/>
</dbReference>
<dbReference type="GO" id="GO:0004930">
    <property type="term" value="F:G protein-coupled receptor activity"/>
    <property type="evidence" value="ECO:0007669"/>
    <property type="project" value="UniProtKB-KW"/>
</dbReference>
<dbReference type="GO" id="GO:0007186">
    <property type="term" value="P:G protein-coupled receptor signaling pathway"/>
    <property type="evidence" value="ECO:0000314"/>
    <property type="project" value="UniProtKB"/>
</dbReference>
<dbReference type="GO" id="GO:0002237">
    <property type="term" value="P:response to molecule of bacterial origin"/>
    <property type="evidence" value="ECO:0000315"/>
    <property type="project" value="UniProtKB"/>
</dbReference>
<dbReference type="GO" id="GO:0010015">
    <property type="term" value="P:root morphogenesis"/>
    <property type="evidence" value="ECO:0000315"/>
    <property type="project" value="TAIR"/>
</dbReference>
<dbReference type="InterPro" id="IPR054103">
    <property type="entry name" value="CAND6-7_N"/>
</dbReference>
<dbReference type="InterPro" id="IPR053937">
    <property type="entry name" value="GOST_TM"/>
</dbReference>
<dbReference type="InterPro" id="IPR009637">
    <property type="entry name" value="GPR107/GPR108-like"/>
</dbReference>
<dbReference type="PANTHER" id="PTHR21229">
    <property type="entry name" value="LUNG SEVEN TRANSMEMBRANE RECEPTOR"/>
    <property type="match status" value="1"/>
</dbReference>
<dbReference type="PANTHER" id="PTHR21229:SF2">
    <property type="entry name" value="RE59932P"/>
    <property type="match status" value="1"/>
</dbReference>
<dbReference type="Pfam" id="PF21904">
    <property type="entry name" value="CAND6-7_N"/>
    <property type="match status" value="1"/>
</dbReference>
<dbReference type="Pfam" id="PF06814">
    <property type="entry name" value="GOST_TM"/>
    <property type="match status" value="1"/>
</dbReference>
<organism>
    <name type="scientific">Arabidopsis thaliana</name>
    <name type="common">Mouse-ear cress</name>
    <dbReference type="NCBI Taxonomy" id="3702"/>
    <lineage>
        <taxon>Eukaryota</taxon>
        <taxon>Viridiplantae</taxon>
        <taxon>Streptophyta</taxon>
        <taxon>Embryophyta</taxon>
        <taxon>Tracheophyta</taxon>
        <taxon>Spermatophyta</taxon>
        <taxon>Magnoliopsida</taxon>
        <taxon>eudicotyledons</taxon>
        <taxon>Gunneridae</taxon>
        <taxon>Pentapetalae</taxon>
        <taxon>rosids</taxon>
        <taxon>malvids</taxon>
        <taxon>Brassicales</taxon>
        <taxon>Brassicaceae</taxon>
        <taxon>Camelineae</taxon>
        <taxon>Arabidopsis</taxon>
    </lineage>
</organism>
<feature type="signal peptide" evidence="1">
    <location>
        <begin position="1"/>
        <end position="24"/>
    </location>
</feature>
<feature type="chain" id="PRO_5003311573" description="Protein CANDIDATE G-PROTEIN COUPLED RECEPTOR 7">
    <location>
        <begin position="25"/>
        <end position="440"/>
    </location>
</feature>
<feature type="transmembrane region" description="Helical; Name=1" evidence="1">
    <location>
        <begin position="175"/>
        <end position="195"/>
    </location>
</feature>
<feature type="transmembrane region" description="Helical; Name=2" evidence="1">
    <location>
        <begin position="207"/>
        <end position="227"/>
    </location>
</feature>
<feature type="transmembrane region" description="Helical; Name=3" evidence="1">
    <location>
        <begin position="243"/>
        <end position="263"/>
    </location>
</feature>
<feature type="transmembrane region" description="Helical; Name=4" evidence="1">
    <location>
        <begin position="281"/>
        <end position="301"/>
    </location>
</feature>
<feature type="transmembrane region" description="Helical; Name=5" evidence="1">
    <location>
        <begin position="315"/>
        <end position="335"/>
    </location>
</feature>
<feature type="transmembrane region" description="Helical; Name=6" evidence="1">
    <location>
        <begin position="363"/>
        <end position="383"/>
    </location>
</feature>
<feature type="transmembrane region" description="Helical; Name=7" evidence="1">
    <location>
        <begin position="390"/>
        <end position="410"/>
    </location>
</feature>
<feature type="glycosylation site" description="N-linked (GlcNAc...) asparagine" evidence="2">
    <location>
        <position position="124"/>
    </location>
</feature>
<feature type="glycosylation site" description="N-linked (GlcNAc...) asparagine" evidence="2">
    <location>
        <position position="162"/>
    </location>
</feature>
<feature type="glycosylation site" description="N-linked (GlcNAc...) asparagine" evidence="2">
    <location>
        <position position="351"/>
    </location>
</feature>
<feature type="sequence conflict" description="In Ref. 3; BAD43449." evidence="6" ref="3">
    <original>V</original>
    <variation>G</variation>
    <location>
        <position position="281"/>
    </location>
</feature>
<feature type="sequence conflict" description="In Ref. 3; BAD94365." evidence="6" ref="3">
    <original>G</original>
    <variation>D</variation>
    <location>
        <position position="346"/>
    </location>
</feature>
<proteinExistence type="evidence at transcript level"/>